<proteinExistence type="evidence at protein level"/>
<sequence>MAEASRWHRGGASKHKLHYRKEVEITTTLQELLLYFIFLINLCILTFGMVNPHMYYLNKVMSSLFLDTSVPGEERTNFKSIRSITDFWKFMEGPLLEGLYWDSWYNNQQLYNLKNSSRIYYENILLGVPRVRQLKVRNNTCKVYSSFQSLMSECYGKYTSANEDLSNFGLQINTEWRYSTSNTNSPWHWGFLGVYRNGGYIFTLSKSKSETKNKFIDLRLNSWITRGTRVIFIDFSLYNANVNLFCIIRLVAEFPATGGILTSWQFYSVKLLRYVSYYDYFIASCEITFCIFLFVFTTQEVKKIKEFKSAYFKSIWNWLELLLLLLCFVAVSFNTYYNVQIFLLLGQLLKSTEKYSDFYFLACWHIYYNNIIAITIFFAWIKIFKFISFNKTMSQLSSTLSRCVKDIVGFAIMFFIIFFAYAQLGFLVFGSQVDDFSTFQNSIFAQFRIVLGDFNFAGIQQANPILGPIYFITFIFFVFFVLLNMFLAIINDTYSEVKADYSIGRRLDFELGKMIKQSYKNVLEKFRLKKAQKDEDKKTKGSGDLAEQARREGFDENEIQNAEQMKKWKERLEKKYYSMEIQDDYQPVTQEEFRELFLYAVELEKELHYINLKLNQVVRKVSAL</sequence>
<accession>Q9NZM6</accession>
<accession>A6NK98</accession>
<accession>B4DXD2</accession>
<accession>E9PC91</accession>
<accession>E9PDG4</accession>
<accession>Q86YB4</accession>
<accession>Q9UNJ0</accession>
<keyword id="KW-0025">Alternative splicing</keyword>
<keyword id="KW-0175">Coiled coil</keyword>
<keyword id="KW-0325">Glycoprotein</keyword>
<keyword id="KW-0407">Ion channel</keyword>
<keyword id="KW-0406">Ion transport</keyword>
<keyword id="KW-0472">Membrane</keyword>
<keyword id="KW-1267">Proteomics identification</keyword>
<keyword id="KW-1185">Reference proteome</keyword>
<keyword id="KW-0812">Transmembrane</keyword>
<keyword id="KW-1133">Transmembrane helix</keyword>
<keyword id="KW-0813">Transport</keyword>
<organism>
    <name type="scientific">Homo sapiens</name>
    <name type="common">Human</name>
    <dbReference type="NCBI Taxonomy" id="9606"/>
    <lineage>
        <taxon>Eukaryota</taxon>
        <taxon>Metazoa</taxon>
        <taxon>Chordata</taxon>
        <taxon>Craniata</taxon>
        <taxon>Vertebrata</taxon>
        <taxon>Euteleostomi</taxon>
        <taxon>Mammalia</taxon>
        <taxon>Eutheria</taxon>
        <taxon>Euarchontoglires</taxon>
        <taxon>Primates</taxon>
        <taxon>Haplorrhini</taxon>
        <taxon>Catarrhini</taxon>
        <taxon>Hominidae</taxon>
        <taxon>Homo</taxon>
    </lineage>
</organism>
<reference key="1">
    <citation type="journal article" date="1999" name="Eur. J. Hum. Genet.">
        <title>Genes homologous to the autosomal dominant polycystic kidney disease genes (PKD1 and PKD2).</title>
        <authorList>
            <person name="Veldhuisen B."/>
            <person name="Spruit L."/>
            <person name="Dauwerse H.G."/>
            <person name="Breuning M.H."/>
            <person name="Peters D.J.M."/>
        </authorList>
    </citation>
    <scope>NUCLEOTIDE SEQUENCE [MRNA] (ISOFORM 5)</scope>
    <scope>TISSUE SPECIFICITY</scope>
    <scope>VARIANT PRO-507</scope>
    <source>
        <tissue>Testis</tissue>
    </source>
</reference>
<reference key="2">
    <citation type="journal article" date="2000" name="Genomics">
        <title>Identification and characterization of a novel polycystin family member, polycystin-L2, in mouse and human: sequence, expression, alternative splicing, and chromosomal localization.</title>
        <authorList>
            <person name="Guo L."/>
            <person name="Schreiber T.H."/>
            <person name="Weremowicz S."/>
            <person name="Morton C.C."/>
            <person name="Lee C."/>
            <person name="Zhou J."/>
        </authorList>
    </citation>
    <scope>NUCLEOTIDE SEQUENCE [MRNA] (ISOFORMS 1; 2; 3 AND 4)</scope>
    <scope>TISSUE SPECIFICITY</scope>
    <scope>VARIANT PRO-507</scope>
</reference>
<reference key="3">
    <citation type="journal article" date="2004" name="Nat. Genet.">
        <title>Complete sequencing and characterization of 21,243 full-length human cDNAs.</title>
        <authorList>
            <person name="Ota T."/>
            <person name="Suzuki Y."/>
            <person name="Nishikawa T."/>
            <person name="Otsuki T."/>
            <person name="Sugiyama T."/>
            <person name="Irie R."/>
            <person name="Wakamatsu A."/>
            <person name="Hayashi K."/>
            <person name="Sato H."/>
            <person name="Nagai K."/>
            <person name="Kimura K."/>
            <person name="Makita H."/>
            <person name="Sekine M."/>
            <person name="Obayashi M."/>
            <person name="Nishi T."/>
            <person name="Shibahara T."/>
            <person name="Tanaka T."/>
            <person name="Ishii S."/>
            <person name="Yamamoto J."/>
            <person name="Saito K."/>
            <person name="Kawai Y."/>
            <person name="Isono Y."/>
            <person name="Nakamura Y."/>
            <person name="Nagahari K."/>
            <person name="Murakami K."/>
            <person name="Yasuda T."/>
            <person name="Iwayanagi T."/>
            <person name="Wagatsuma M."/>
            <person name="Shiratori A."/>
            <person name="Sudo H."/>
            <person name="Hosoiri T."/>
            <person name="Kaku Y."/>
            <person name="Kodaira H."/>
            <person name="Kondo H."/>
            <person name="Sugawara M."/>
            <person name="Takahashi M."/>
            <person name="Kanda K."/>
            <person name="Yokoi T."/>
            <person name="Furuya T."/>
            <person name="Kikkawa E."/>
            <person name="Omura Y."/>
            <person name="Abe K."/>
            <person name="Kamihara K."/>
            <person name="Katsuta N."/>
            <person name="Sato K."/>
            <person name="Tanikawa M."/>
            <person name="Yamazaki M."/>
            <person name="Ninomiya K."/>
            <person name="Ishibashi T."/>
            <person name="Yamashita H."/>
            <person name="Murakawa K."/>
            <person name="Fujimori K."/>
            <person name="Tanai H."/>
            <person name="Kimata M."/>
            <person name="Watanabe M."/>
            <person name="Hiraoka S."/>
            <person name="Chiba Y."/>
            <person name="Ishida S."/>
            <person name="Ono Y."/>
            <person name="Takiguchi S."/>
            <person name="Watanabe S."/>
            <person name="Yosida M."/>
            <person name="Hotuta T."/>
            <person name="Kusano J."/>
            <person name="Kanehori K."/>
            <person name="Takahashi-Fujii A."/>
            <person name="Hara H."/>
            <person name="Tanase T.-O."/>
            <person name="Nomura Y."/>
            <person name="Togiya S."/>
            <person name="Komai F."/>
            <person name="Hara R."/>
            <person name="Takeuchi K."/>
            <person name="Arita M."/>
            <person name="Imose N."/>
            <person name="Musashino K."/>
            <person name="Yuuki H."/>
            <person name="Oshima A."/>
            <person name="Sasaki N."/>
            <person name="Aotsuka S."/>
            <person name="Yoshikawa Y."/>
            <person name="Matsunawa H."/>
            <person name="Ichihara T."/>
            <person name="Shiohata N."/>
            <person name="Sano S."/>
            <person name="Moriya S."/>
            <person name="Momiyama H."/>
            <person name="Satoh N."/>
            <person name="Takami S."/>
            <person name="Terashima Y."/>
            <person name="Suzuki O."/>
            <person name="Nakagawa S."/>
            <person name="Senoh A."/>
            <person name="Mizoguchi H."/>
            <person name="Goto Y."/>
            <person name="Shimizu F."/>
            <person name="Wakebe H."/>
            <person name="Hishigaki H."/>
            <person name="Watanabe T."/>
            <person name="Sugiyama A."/>
            <person name="Takemoto M."/>
            <person name="Kawakami B."/>
            <person name="Yamazaki M."/>
            <person name="Watanabe K."/>
            <person name="Kumagai A."/>
            <person name="Itakura S."/>
            <person name="Fukuzumi Y."/>
            <person name="Fujimori Y."/>
            <person name="Komiyama M."/>
            <person name="Tashiro H."/>
            <person name="Tanigami A."/>
            <person name="Fujiwara T."/>
            <person name="Ono T."/>
            <person name="Yamada K."/>
            <person name="Fujii Y."/>
            <person name="Ozaki K."/>
            <person name="Hirao M."/>
            <person name="Ohmori Y."/>
            <person name="Kawabata A."/>
            <person name="Hikiji T."/>
            <person name="Kobatake N."/>
            <person name="Inagaki H."/>
            <person name="Ikema Y."/>
            <person name="Okamoto S."/>
            <person name="Okitani R."/>
            <person name="Kawakami T."/>
            <person name="Noguchi S."/>
            <person name="Itoh T."/>
            <person name="Shigeta K."/>
            <person name="Senba T."/>
            <person name="Matsumura K."/>
            <person name="Nakajima Y."/>
            <person name="Mizuno T."/>
            <person name="Morinaga M."/>
            <person name="Sasaki M."/>
            <person name="Togashi T."/>
            <person name="Oyama M."/>
            <person name="Hata H."/>
            <person name="Watanabe M."/>
            <person name="Komatsu T."/>
            <person name="Mizushima-Sugano J."/>
            <person name="Satoh T."/>
            <person name="Shirai Y."/>
            <person name="Takahashi Y."/>
            <person name="Nakagawa K."/>
            <person name="Okumura K."/>
            <person name="Nagase T."/>
            <person name="Nomura N."/>
            <person name="Kikuchi H."/>
            <person name="Masuho Y."/>
            <person name="Yamashita R."/>
            <person name="Nakai K."/>
            <person name="Yada T."/>
            <person name="Nakamura Y."/>
            <person name="Ohara O."/>
            <person name="Isogai T."/>
            <person name="Sugano S."/>
        </authorList>
    </citation>
    <scope>NUCLEOTIDE SEQUENCE [LARGE SCALE MRNA] (ISOFORM 7)</scope>
    <scope>VARIANTS ILE-404 AND PRO-507</scope>
    <source>
        <tissue>Testis</tissue>
    </source>
</reference>
<reference key="4">
    <citation type="journal article" date="2004" name="Nature">
        <title>The DNA sequence and comparative analysis of human chromosome 5.</title>
        <authorList>
            <person name="Schmutz J."/>
            <person name="Martin J."/>
            <person name="Terry A."/>
            <person name="Couronne O."/>
            <person name="Grimwood J."/>
            <person name="Lowry S."/>
            <person name="Gordon L.A."/>
            <person name="Scott D."/>
            <person name="Xie G."/>
            <person name="Huang W."/>
            <person name="Hellsten U."/>
            <person name="Tran-Gyamfi M."/>
            <person name="She X."/>
            <person name="Prabhakar S."/>
            <person name="Aerts A."/>
            <person name="Altherr M."/>
            <person name="Bajorek E."/>
            <person name="Black S."/>
            <person name="Branscomb E."/>
            <person name="Caoile C."/>
            <person name="Challacombe J.F."/>
            <person name="Chan Y.M."/>
            <person name="Denys M."/>
            <person name="Detter J.C."/>
            <person name="Escobar J."/>
            <person name="Flowers D."/>
            <person name="Fotopulos D."/>
            <person name="Glavina T."/>
            <person name="Gomez M."/>
            <person name="Gonzales E."/>
            <person name="Goodstein D."/>
            <person name="Grigoriev I."/>
            <person name="Groza M."/>
            <person name="Hammon N."/>
            <person name="Hawkins T."/>
            <person name="Haydu L."/>
            <person name="Israni S."/>
            <person name="Jett J."/>
            <person name="Kadner K."/>
            <person name="Kimball H."/>
            <person name="Kobayashi A."/>
            <person name="Lopez F."/>
            <person name="Lou Y."/>
            <person name="Martinez D."/>
            <person name="Medina C."/>
            <person name="Morgan J."/>
            <person name="Nandkeshwar R."/>
            <person name="Noonan J.P."/>
            <person name="Pitluck S."/>
            <person name="Pollard M."/>
            <person name="Predki P."/>
            <person name="Priest J."/>
            <person name="Ramirez L."/>
            <person name="Retterer J."/>
            <person name="Rodriguez A."/>
            <person name="Rogers S."/>
            <person name="Salamov A."/>
            <person name="Salazar A."/>
            <person name="Thayer N."/>
            <person name="Tice H."/>
            <person name="Tsai M."/>
            <person name="Ustaszewska A."/>
            <person name="Vo N."/>
            <person name="Wheeler J."/>
            <person name="Wu K."/>
            <person name="Yang J."/>
            <person name="Dickson M."/>
            <person name="Cheng J.-F."/>
            <person name="Eichler E.E."/>
            <person name="Olsen A."/>
            <person name="Pennacchio L.A."/>
            <person name="Rokhsar D.S."/>
            <person name="Richardson P."/>
            <person name="Lucas S.M."/>
            <person name="Myers R.M."/>
            <person name="Rubin E.M."/>
        </authorList>
    </citation>
    <scope>NUCLEOTIDE SEQUENCE [LARGE SCALE GENOMIC DNA]</scope>
</reference>
<reference key="5">
    <citation type="submission" date="2005-09" db="EMBL/GenBank/DDBJ databases">
        <authorList>
            <person name="Mural R.J."/>
            <person name="Istrail S."/>
            <person name="Sutton G."/>
            <person name="Florea L."/>
            <person name="Halpern A.L."/>
            <person name="Mobarry C.M."/>
            <person name="Lippert R."/>
            <person name="Walenz B."/>
            <person name="Shatkay H."/>
            <person name="Dew I."/>
            <person name="Miller J.R."/>
            <person name="Flanigan M.J."/>
            <person name="Edwards N.J."/>
            <person name="Bolanos R."/>
            <person name="Fasulo D."/>
            <person name="Halldorsson B.V."/>
            <person name="Hannenhalli S."/>
            <person name="Turner R."/>
            <person name="Yooseph S."/>
            <person name="Lu F."/>
            <person name="Nusskern D.R."/>
            <person name="Shue B.C."/>
            <person name="Zheng X.H."/>
            <person name="Zhong F."/>
            <person name="Delcher A.L."/>
            <person name="Huson D.H."/>
            <person name="Kravitz S.A."/>
            <person name="Mouchard L."/>
            <person name="Reinert K."/>
            <person name="Remington K.A."/>
            <person name="Clark A.G."/>
            <person name="Waterman M.S."/>
            <person name="Eichler E.E."/>
            <person name="Adams M.D."/>
            <person name="Hunkapiller M.W."/>
            <person name="Myers E.W."/>
            <person name="Venter J.C."/>
        </authorList>
    </citation>
    <scope>NUCLEOTIDE SEQUENCE [LARGE SCALE GENOMIC DNA]</scope>
</reference>
<reference key="6">
    <citation type="journal article" date="2004" name="Genome Res.">
        <title>The status, quality, and expansion of the NIH full-length cDNA project: the Mammalian Gene Collection (MGC).</title>
        <authorList>
            <consortium name="The MGC Project Team"/>
        </authorList>
    </citation>
    <scope>NUCLEOTIDE SEQUENCE [LARGE SCALE MRNA] (ISOFORM 6)</scope>
    <scope>VARIANT PRO-507</scope>
    <source>
        <tissue>Testis</tissue>
    </source>
</reference>
<reference key="7">
    <citation type="journal article" date="2006" name="J. Cell. Physiol.">
        <title>Functional characterization of PKDREJ, a male germ cell-restricted polycystin.</title>
        <authorList>
            <person name="Sutton K.A."/>
            <person name="Jungnickel M.K."/>
            <person name="Ward C.J."/>
            <person name="Harris P.C."/>
            <person name="Florman H.M."/>
        </authorList>
    </citation>
    <scope>FUNCTION</scope>
    <scope>INTERACTION WITH TRPC1 AND TRPC5</scope>
</reference>
<comment type="function">
    <text evidence="1 7">Exhibits a lower single conductance but no spontaneous channel activity (PubMed:16883570). May function as a regulator of calcium channels or a channel component involving Ca2(+) homeostasis (By similarity).</text>
</comment>
<comment type="subunit">
    <text evidence="7">Interacts with TRPC1 and TRPC5.</text>
</comment>
<comment type="subcellular location">
    <subcellularLocation>
        <location evidence="1">Membrane</location>
        <topology evidence="2">Multi-pass membrane protein</topology>
    </subcellularLocation>
</comment>
<comment type="alternative products">
    <event type="alternative splicing"/>
    <isoform>
        <id>Q9NZM6-1</id>
        <name>1</name>
        <sequence type="displayed"/>
    </isoform>
    <isoform>
        <id>Q9NZM6-2</id>
        <name>2</name>
        <name>PKD2L2b</name>
        <sequence type="described" ref="VSP_004732 VSP_004735"/>
    </isoform>
    <isoform>
        <id>Q9NZM6-3</id>
        <name>3</name>
        <name>PKD2L2a</name>
        <sequence type="described" ref="VSP_004736 VSP_004737"/>
    </isoform>
    <isoform>
        <id>Q9NZM6-4</id>
        <name>4</name>
        <name>PKD2L2c</name>
        <sequence type="described" ref="VSP_004733 VSP_004734"/>
    </isoform>
    <isoform>
        <id>Q9NZM6-5</id>
        <name>5</name>
        <sequence type="described" ref="VSP_035775"/>
    </isoform>
    <isoform>
        <id>Q9NZM6-6</id>
        <name>6</name>
        <sequence type="described" ref="VSP_045582"/>
    </isoform>
    <isoform>
        <id>Q9NZM6-7</id>
        <name>7</name>
        <sequence type="described" ref="VSP_045581"/>
    </isoform>
    <text>Experimental confirmation may be lacking for some isoforms.</text>
</comment>
<comment type="tissue specificity">
    <text evidence="3 4">Expressed only in testis (PubMed:10602361). Expressed also in brain and kidney (PubMed:10756092).</text>
</comment>
<comment type="tissue specificity">
    <molecule>Isoform 2</molecule>
    <text evidence="4">Expressed only in transformed lymphoblasts.</text>
</comment>
<comment type="similarity">
    <text evidence="12">Belongs to the polycystin family.</text>
</comment>
<comment type="sequence caution" evidence="12">
    <conflict type="frameshift">
        <sequence resource="EMBL-CDS" id="AAD46478"/>
    </conflict>
</comment>
<evidence type="ECO:0000250" key="1">
    <source>
        <dbReference type="UniProtKB" id="Q9JLG4"/>
    </source>
</evidence>
<evidence type="ECO:0000255" key="2"/>
<evidence type="ECO:0000269" key="3">
    <source>
    </source>
</evidence>
<evidence type="ECO:0000269" key="4">
    <source>
    </source>
</evidence>
<evidence type="ECO:0000269" key="5">
    <source>
    </source>
</evidence>
<evidence type="ECO:0000269" key="6">
    <source>
    </source>
</evidence>
<evidence type="ECO:0000269" key="7">
    <source>
    </source>
</evidence>
<evidence type="ECO:0000303" key="8">
    <source>
    </source>
</evidence>
<evidence type="ECO:0000303" key="9">
    <source>
    </source>
</evidence>
<evidence type="ECO:0000303" key="10">
    <source>
    </source>
</evidence>
<evidence type="ECO:0000303" key="11">
    <source>
    </source>
</evidence>
<evidence type="ECO:0000305" key="12"/>
<evidence type="ECO:0000312" key="13">
    <source>
        <dbReference type="HGNC" id="HGNC:9012"/>
    </source>
</evidence>
<name>PK2L2_HUMAN</name>
<gene>
    <name evidence="13" type="primary">PKD2L2</name>
    <name type="synonym">TRPP5</name>
</gene>
<feature type="chain" id="PRO_0000164361" description="Polycystin-2-like protein 2">
    <location>
        <begin position="1"/>
        <end position="624"/>
    </location>
</feature>
<feature type="topological domain" description="Cytoplasmic" evidence="2">
    <location>
        <begin position="1"/>
        <end position="31"/>
    </location>
</feature>
<feature type="transmembrane region" description="Helical" evidence="2">
    <location>
        <begin position="32"/>
        <end position="52"/>
    </location>
</feature>
<feature type="topological domain" description="Extracellular" evidence="2">
    <location>
        <begin position="53"/>
        <end position="276"/>
    </location>
</feature>
<feature type="transmembrane region" description="Helical" evidence="2">
    <location>
        <begin position="277"/>
        <end position="297"/>
    </location>
</feature>
<feature type="topological domain" description="Cytoplasmic" evidence="2">
    <location>
        <begin position="298"/>
        <end position="314"/>
    </location>
</feature>
<feature type="transmembrane region" description="Helical" evidence="2">
    <location>
        <begin position="315"/>
        <end position="335"/>
    </location>
</feature>
<feature type="topological domain" description="Extracellular" evidence="2">
    <location>
        <begin position="336"/>
        <end position="360"/>
    </location>
</feature>
<feature type="transmembrane region" description="Helical" evidence="2">
    <location>
        <begin position="361"/>
        <end position="381"/>
    </location>
</feature>
<feature type="topological domain" description="Cytoplasmic" evidence="2">
    <location>
        <begin position="382"/>
        <end position="406"/>
    </location>
</feature>
<feature type="transmembrane region" description="Helical" evidence="2">
    <location>
        <begin position="407"/>
        <end position="427"/>
    </location>
</feature>
<feature type="topological domain" description="Extracellular" evidence="2">
    <location>
        <begin position="428"/>
        <end position="469"/>
    </location>
</feature>
<feature type="transmembrane region" description="Helical" evidence="2">
    <location>
        <begin position="470"/>
        <end position="490"/>
    </location>
</feature>
<feature type="topological domain" description="Cytoplasmic" evidence="2">
    <location>
        <begin position="491"/>
        <end position="624"/>
    </location>
</feature>
<feature type="coiled-coil region" evidence="2">
    <location>
        <begin position="556"/>
        <end position="576"/>
    </location>
</feature>
<feature type="glycosylation site" description="N-linked (GlcNAc...) asparagine" evidence="2">
    <location>
        <position position="115"/>
    </location>
</feature>
<feature type="glycosylation site" description="N-linked (GlcNAc...) asparagine" evidence="2">
    <location>
        <position position="138"/>
    </location>
</feature>
<feature type="splice variant" id="VSP_004732" description="In isoform 2." evidence="9">
    <location>
        <begin position="11"/>
        <end position="44"/>
    </location>
</feature>
<feature type="splice variant" id="VSP_004733" description="In isoform 4." evidence="9">
    <original>ASKHKLHYRKEV</original>
    <variation>YVISIFGHFCAW</variation>
    <location>
        <begin position="12"/>
        <end position="23"/>
    </location>
</feature>
<feature type="splice variant" id="VSP_004734" description="In isoform 4." evidence="9">
    <location>
        <begin position="24"/>
        <end position="624"/>
    </location>
</feature>
<feature type="splice variant" id="VSP_004736" description="In isoform 3." evidence="9">
    <original>LTFGMVNPHMYYL</original>
    <variation>CYVISIFGHFCAW</variation>
    <location>
        <begin position="45"/>
        <end position="57"/>
    </location>
</feature>
<feature type="splice variant" id="VSP_004735" description="In isoform 2." evidence="9">
    <original>L</original>
    <variation>V</variation>
    <location>
        <position position="45"/>
    </location>
</feature>
<feature type="splice variant" id="VSP_004737" description="In isoform 3." evidence="9">
    <location>
        <begin position="58"/>
        <end position="624"/>
    </location>
</feature>
<feature type="splice variant" id="VSP_045581" description="In isoform 7." evidence="10">
    <location>
        <begin position="326"/>
        <end position="347"/>
    </location>
</feature>
<feature type="splice variant" id="VSP_045582" description="In isoform 6." evidence="11">
    <location>
        <begin position="383"/>
        <end position="483"/>
    </location>
</feature>
<feature type="splice variant" id="VSP_035775" description="In isoform 5." evidence="8">
    <original>ELFLYAVELEKELHYINLKLNQVVRKVSAL</original>
    <variation>DGTTTKYKMRFSECLTKRI</variation>
    <location>
        <begin position="595"/>
        <end position="624"/>
    </location>
</feature>
<feature type="sequence variant" id="VAR_047542" description="In dbSNP:rs1880458." evidence="5">
    <original>V</original>
    <variation>I</variation>
    <location>
        <position position="404"/>
    </location>
</feature>
<feature type="sequence variant" id="VAR_047543" description="In dbSNP:rs12187140." evidence="3 4 5 6">
    <original>L</original>
    <variation>P</variation>
    <location>
        <position position="507"/>
    </location>
</feature>
<feature type="sequence conflict" description="In Ref. 3; BAG63344." evidence="12" ref="3">
    <location>
        <begin position="205"/>
        <end position="206"/>
    </location>
</feature>
<dbReference type="EMBL" id="AF118125">
    <property type="protein sequence ID" value="AAD46478.1"/>
    <property type="status" value="ALT_FRAME"/>
    <property type="molecule type" value="mRNA"/>
</dbReference>
<dbReference type="EMBL" id="AF182034">
    <property type="protein sequence ID" value="AAF65622.1"/>
    <property type="molecule type" value="mRNA"/>
</dbReference>
<dbReference type="EMBL" id="AC106753">
    <property type="status" value="NOT_ANNOTATED_CDS"/>
    <property type="molecule type" value="Genomic_DNA"/>
</dbReference>
<dbReference type="EMBL" id="AK301924">
    <property type="protein sequence ID" value="BAG63344.1"/>
    <property type="molecule type" value="mRNA"/>
</dbReference>
<dbReference type="EMBL" id="AC106791">
    <property type="status" value="NOT_ANNOTATED_CDS"/>
    <property type="molecule type" value="Genomic_DNA"/>
</dbReference>
<dbReference type="EMBL" id="CH471062">
    <property type="protein sequence ID" value="EAW62174.1"/>
    <property type="molecule type" value="Genomic_DNA"/>
</dbReference>
<dbReference type="EMBL" id="BC044581">
    <property type="protein sequence ID" value="AAH44581.1"/>
    <property type="molecule type" value="mRNA"/>
</dbReference>
<dbReference type="CCDS" id="CCDS43367.1">
    <molecule id="Q9NZM6-5"/>
</dbReference>
<dbReference type="CCDS" id="CCDS58971.1">
    <molecule id="Q9NZM6-6"/>
</dbReference>
<dbReference type="CCDS" id="CCDS58972.1">
    <molecule id="Q9NZM6-7"/>
</dbReference>
<dbReference type="CCDS" id="CCDS78062.1">
    <molecule id="Q9NZM6-1"/>
</dbReference>
<dbReference type="RefSeq" id="NP_001245377.1">
    <molecule id="Q9NZM6-7"/>
    <property type="nucleotide sequence ID" value="NM_001258448.2"/>
</dbReference>
<dbReference type="RefSeq" id="NP_001245378.1">
    <molecule id="Q9NZM6-6"/>
    <property type="nucleotide sequence ID" value="NM_001258449.2"/>
</dbReference>
<dbReference type="RefSeq" id="NP_001287850.1">
    <molecule id="Q9NZM6-1"/>
    <property type="nucleotide sequence ID" value="NM_001300921.2"/>
</dbReference>
<dbReference type="RefSeq" id="NP_055201.2">
    <molecule id="Q9NZM6-5"/>
    <property type="nucleotide sequence ID" value="NM_014386.4"/>
</dbReference>
<dbReference type="RefSeq" id="XP_011541620.1">
    <molecule id="Q9NZM6-2"/>
    <property type="nucleotide sequence ID" value="XM_011543318.4"/>
</dbReference>
<dbReference type="SMR" id="Q9NZM6"/>
<dbReference type="BioGRID" id="117970">
    <property type="interactions" value="10"/>
</dbReference>
<dbReference type="FunCoup" id="Q9NZM6">
    <property type="interactions" value="96"/>
</dbReference>
<dbReference type="IntAct" id="Q9NZM6">
    <property type="interactions" value="11"/>
</dbReference>
<dbReference type="STRING" id="9606.ENSP00000424725"/>
<dbReference type="GlyCosmos" id="Q9NZM6">
    <property type="glycosylation" value="2 sites, No reported glycans"/>
</dbReference>
<dbReference type="GlyGen" id="Q9NZM6">
    <property type="glycosylation" value="2 sites"/>
</dbReference>
<dbReference type="iPTMnet" id="Q9NZM6"/>
<dbReference type="PhosphoSitePlus" id="Q9NZM6"/>
<dbReference type="BioMuta" id="PKD2L2"/>
<dbReference type="DMDM" id="317373272"/>
<dbReference type="jPOST" id="Q9NZM6"/>
<dbReference type="MassIVE" id="Q9NZM6"/>
<dbReference type="PaxDb" id="9606-ENSP00000290431"/>
<dbReference type="PeptideAtlas" id="Q9NZM6"/>
<dbReference type="ProteomicsDB" id="19398"/>
<dbReference type="ProteomicsDB" id="19659"/>
<dbReference type="ProteomicsDB" id="83452">
    <molecule id="Q9NZM6-1"/>
</dbReference>
<dbReference type="ProteomicsDB" id="83454">
    <molecule id="Q9NZM6-3"/>
</dbReference>
<dbReference type="ProteomicsDB" id="83456">
    <molecule id="Q9NZM6-5"/>
</dbReference>
<dbReference type="Antibodypedia" id="26539">
    <property type="antibodies" value="98 antibodies from 17 providers"/>
</dbReference>
<dbReference type="DNASU" id="27039"/>
<dbReference type="Ensembl" id="ENST00000290431.5">
    <molecule id="Q9NZM6-5"/>
    <property type="protein sequence ID" value="ENSP00000290431.5"/>
    <property type="gene ID" value="ENSG00000078795.17"/>
</dbReference>
<dbReference type="Ensembl" id="ENST00000414094.6">
    <molecule id="Q9NZM6-3"/>
    <property type="protein sequence ID" value="ENSP00000388060.2"/>
    <property type="gene ID" value="ENSG00000078795.17"/>
</dbReference>
<dbReference type="Ensembl" id="ENST00000502810.5">
    <molecule id="Q9NZM6-7"/>
    <property type="protein sequence ID" value="ENSP00000425513.1"/>
    <property type="gene ID" value="ENSG00000078795.17"/>
</dbReference>
<dbReference type="Ensembl" id="ENST00000508638.5">
    <molecule id="Q9NZM6-6"/>
    <property type="protein sequence ID" value="ENSP00000423382.1"/>
    <property type="gene ID" value="ENSG00000078795.17"/>
</dbReference>
<dbReference type="Ensembl" id="ENST00000508883.6">
    <molecule id="Q9NZM6-1"/>
    <property type="protein sequence ID" value="ENSP00000424725.1"/>
    <property type="gene ID" value="ENSG00000078795.17"/>
</dbReference>
<dbReference type="GeneID" id="27039"/>
<dbReference type="KEGG" id="hsa:27039"/>
<dbReference type="MANE-Select" id="ENST00000508883.6">
    <property type="protein sequence ID" value="ENSP00000424725.1"/>
    <property type="RefSeq nucleotide sequence ID" value="NM_001300921.2"/>
    <property type="RefSeq protein sequence ID" value="NP_001287850.1"/>
</dbReference>
<dbReference type="UCSC" id="uc003lbw.2">
    <molecule id="Q9NZM6-1"/>
    <property type="organism name" value="human"/>
</dbReference>
<dbReference type="AGR" id="HGNC:9012"/>
<dbReference type="CTD" id="27039"/>
<dbReference type="DisGeNET" id="27039"/>
<dbReference type="GeneCards" id="PKD2L2"/>
<dbReference type="HGNC" id="HGNC:9012">
    <property type="gene designation" value="PKD2L2"/>
</dbReference>
<dbReference type="HPA" id="ENSG00000078795">
    <property type="expression patterns" value="Tissue enhanced (testis)"/>
</dbReference>
<dbReference type="MIM" id="604669">
    <property type="type" value="gene"/>
</dbReference>
<dbReference type="neXtProt" id="NX_Q9NZM6"/>
<dbReference type="OpenTargets" id="ENSG00000078795"/>
<dbReference type="PharmGKB" id="PA33345"/>
<dbReference type="VEuPathDB" id="HostDB:ENSG00000078795"/>
<dbReference type="eggNOG" id="KOG3599">
    <property type="taxonomic scope" value="Eukaryota"/>
</dbReference>
<dbReference type="GeneTree" id="ENSGT00940000161122"/>
<dbReference type="HOGENOM" id="CLU_2995942_0_0_1"/>
<dbReference type="InParanoid" id="Q9NZM6"/>
<dbReference type="OMA" id="MVDFWKF"/>
<dbReference type="OrthoDB" id="444119at2759"/>
<dbReference type="PAN-GO" id="Q9NZM6">
    <property type="GO annotations" value="3 GO annotations based on evolutionary models"/>
</dbReference>
<dbReference type="PhylomeDB" id="Q9NZM6"/>
<dbReference type="TreeFam" id="TF316484"/>
<dbReference type="PathwayCommons" id="Q9NZM6"/>
<dbReference type="SignaLink" id="Q9NZM6"/>
<dbReference type="BioGRID-ORCS" id="27039">
    <property type="hits" value="8 hits in 1141 CRISPR screens"/>
</dbReference>
<dbReference type="GeneWiki" id="TRPP3"/>
<dbReference type="GenomeRNAi" id="27039"/>
<dbReference type="Pharos" id="Q9NZM6">
    <property type="development level" value="Tbio"/>
</dbReference>
<dbReference type="PRO" id="PR:Q9NZM6"/>
<dbReference type="Proteomes" id="UP000005640">
    <property type="component" value="Chromosome 5"/>
</dbReference>
<dbReference type="RNAct" id="Q9NZM6">
    <property type="molecule type" value="protein"/>
</dbReference>
<dbReference type="Bgee" id="ENSG00000078795">
    <property type="expression patterns" value="Expressed in tendon of biceps brachii and 107 other cell types or tissues"/>
</dbReference>
<dbReference type="ExpressionAtlas" id="Q9NZM6">
    <property type="expression patterns" value="baseline and differential"/>
</dbReference>
<dbReference type="GO" id="GO:0016020">
    <property type="term" value="C:membrane"/>
    <property type="evidence" value="ECO:0000318"/>
    <property type="project" value="GO_Central"/>
</dbReference>
<dbReference type="GO" id="GO:0005262">
    <property type="term" value="F:calcium channel activity"/>
    <property type="evidence" value="ECO:0000318"/>
    <property type="project" value="GO_Central"/>
</dbReference>
<dbReference type="GO" id="GO:0005509">
    <property type="term" value="F:calcium ion binding"/>
    <property type="evidence" value="ECO:0007669"/>
    <property type="project" value="InterPro"/>
</dbReference>
<dbReference type="GO" id="GO:0050982">
    <property type="term" value="P:detection of mechanical stimulus"/>
    <property type="evidence" value="ECO:0000318"/>
    <property type="project" value="GO_Central"/>
</dbReference>
<dbReference type="FunFam" id="1.10.287.70:FF:000096">
    <property type="entry name" value="polycystic kidney disease 2-like 2 protein isoform X2"/>
    <property type="match status" value="1"/>
</dbReference>
<dbReference type="Gene3D" id="1.10.287.70">
    <property type="match status" value="1"/>
</dbReference>
<dbReference type="InterPro" id="IPR013122">
    <property type="entry name" value="PKD1_2_channel"/>
</dbReference>
<dbReference type="InterPro" id="IPR003915">
    <property type="entry name" value="PKD_2"/>
</dbReference>
<dbReference type="InterPro" id="IPR051223">
    <property type="entry name" value="Polycystin"/>
</dbReference>
<dbReference type="InterPro" id="IPR046791">
    <property type="entry name" value="Polycystin_dom"/>
</dbReference>
<dbReference type="PANTHER" id="PTHR10877">
    <property type="entry name" value="POLYCYSTIN FAMILY MEMBER"/>
    <property type="match status" value="1"/>
</dbReference>
<dbReference type="PANTHER" id="PTHR10877:SF47">
    <property type="entry name" value="POLYCYSTIN-2-LIKE PROTEIN 2"/>
    <property type="match status" value="1"/>
</dbReference>
<dbReference type="Pfam" id="PF08016">
    <property type="entry name" value="PKD_channel"/>
    <property type="match status" value="1"/>
</dbReference>
<dbReference type="Pfam" id="PF20519">
    <property type="entry name" value="Polycystin_dom"/>
    <property type="match status" value="1"/>
</dbReference>
<dbReference type="PRINTS" id="PR01433">
    <property type="entry name" value="POLYCYSTIN2"/>
</dbReference>
<protein>
    <recommendedName>
        <fullName evidence="12">Polycystin-2-like protein 2</fullName>
        <shortName>Polycystin-2L2</shortName>
    </recommendedName>
    <alternativeName>
        <fullName>Polycystic kidney disease 2-like 2 protein</fullName>
    </alternativeName>
    <alternativeName>
        <fullName>Polycystin-L2</fullName>
    </alternativeName>
</protein>